<comment type="function">
    <text evidence="1">May act as a double-stranded DNA (dsDNA) mimic. Probably regulates the activity of a dsDNA-binding protein.</text>
</comment>
<comment type="similarity">
    <text evidence="1">Belongs to the putative dsDNA mimic protein family.</text>
</comment>
<dbReference type="EMBL" id="AE016795">
    <property type="protein sequence ID" value="AAO11383.1"/>
    <property type="molecule type" value="Genomic_DNA"/>
</dbReference>
<dbReference type="RefSeq" id="WP_011080862.1">
    <property type="nucleotide sequence ID" value="NC_004459.3"/>
</dbReference>
<dbReference type="SMR" id="Q8D8C1"/>
<dbReference type="KEGG" id="vvu:VV1_3059"/>
<dbReference type="HOGENOM" id="CLU_143392_0_0_6"/>
<dbReference type="Proteomes" id="UP000002275">
    <property type="component" value="Chromosome 1"/>
</dbReference>
<dbReference type="Gene3D" id="3.10.450.140">
    <property type="entry name" value="dsDNA mimic, putative"/>
    <property type="match status" value="1"/>
</dbReference>
<dbReference type="HAMAP" id="MF_00680">
    <property type="entry name" value="Put_dsDNA_mimic"/>
    <property type="match status" value="1"/>
</dbReference>
<dbReference type="InterPro" id="IPR007376">
    <property type="entry name" value="dsDNA_mimic_put"/>
</dbReference>
<dbReference type="InterPro" id="IPR036763">
    <property type="entry name" value="Put_dsDNA_mimic_sf"/>
</dbReference>
<dbReference type="NCBIfam" id="NF003469">
    <property type="entry name" value="PRK05094.1"/>
    <property type="match status" value="1"/>
</dbReference>
<dbReference type="Pfam" id="PF04269">
    <property type="entry name" value="DUF440"/>
    <property type="match status" value="1"/>
</dbReference>
<dbReference type="PIRSF" id="PIRSF004916">
    <property type="entry name" value="UCP004916"/>
    <property type="match status" value="1"/>
</dbReference>
<dbReference type="SUPFAM" id="SSF102816">
    <property type="entry name" value="Putative dsDNA mimic"/>
    <property type="match status" value="1"/>
</dbReference>
<sequence>MADLISYDDAIDAAYDIFLEMAPDNLEPVDVILFTAQFDDRGAAELVDISDDWAGHVGFDVDKEIYAEVRIGLVNEENDVLDDVFARMLISRDPDQKFCHILWKRD</sequence>
<evidence type="ECO:0000255" key="1">
    <source>
        <dbReference type="HAMAP-Rule" id="MF_00680"/>
    </source>
</evidence>
<accession>Q8D8C1</accession>
<reference key="1">
    <citation type="submission" date="2002-12" db="EMBL/GenBank/DDBJ databases">
        <title>Complete genome sequence of Vibrio vulnificus CMCP6.</title>
        <authorList>
            <person name="Rhee J.H."/>
            <person name="Kim S.Y."/>
            <person name="Chung S.S."/>
            <person name="Kim J.J."/>
            <person name="Moon Y.H."/>
            <person name="Jeong H."/>
            <person name="Choy H.E."/>
        </authorList>
    </citation>
    <scope>NUCLEOTIDE SEQUENCE [LARGE SCALE GENOMIC DNA]</scope>
    <source>
        <strain>CMCP6</strain>
    </source>
</reference>
<feature type="chain" id="PRO_0000072787" description="Putative double-stranded DNA mimic protein VV1_3059">
    <location>
        <begin position="1"/>
        <end position="106"/>
    </location>
</feature>
<name>Y3059_VIBVU</name>
<protein>
    <recommendedName>
        <fullName evidence="1">Putative double-stranded DNA mimic protein VV1_3059</fullName>
    </recommendedName>
</protein>
<gene>
    <name type="ordered locus">VV1_3059</name>
</gene>
<proteinExistence type="inferred from homology"/>
<organism>
    <name type="scientific">Vibrio vulnificus (strain CMCP6)</name>
    <dbReference type="NCBI Taxonomy" id="216895"/>
    <lineage>
        <taxon>Bacteria</taxon>
        <taxon>Pseudomonadati</taxon>
        <taxon>Pseudomonadota</taxon>
        <taxon>Gammaproteobacteria</taxon>
        <taxon>Vibrionales</taxon>
        <taxon>Vibrionaceae</taxon>
        <taxon>Vibrio</taxon>
    </lineage>
</organism>